<proteinExistence type="inferred from homology"/>
<comment type="function">
    <text evidence="1">Catalyzes the isomerization between 2-isopropylmalate and 3-isopropylmalate, via the formation of 2-isopropylmaleate.</text>
</comment>
<comment type="catalytic activity">
    <reaction evidence="1">
        <text>(2R,3S)-3-isopropylmalate = (2S)-2-isopropylmalate</text>
        <dbReference type="Rhea" id="RHEA:32287"/>
        <dbReference type="ChEBI" id="CHEBI:1178"/>
        <dbReference type="ChEBI" id="CHEBI:35121"/>
        <dbReference type="EC" id="4.2.1.33"/>
    </reaction>
</comment>
<comment type="pathway">
    <text evidence="1">Amino-acid biosynthesis; L-leucine biosynthesis; L-leucine from 3-methyl-2-oxobutanoate: step 2/4.</text>
</comment>
<comment type="subunit">
    <text evidence="1">Heterodimer of LeuC and LeuD.</text>
</comment>
<comment type="similarity">
    <text evidence="1">Belongs to the LeuD family. LeuD type 1 subfamily.</text>
</comment>
<protein>
    <recommendedName>
        <fullName evidence="1">3-isopropylmalate dehydratase small subunit</fullName>
        <ecNumber evidence="1">4.2.1.33</ecNumber>
    </recommendedName>
    <alternativeName>
        <fullName evidence="1">Alpha-IPM isomerase</fullName>
        <shortName evidence="1">IPMI</shortName>
    </alternativeName>
    <alternativeName>
        <fullName evidence="1">Isopropylmalate isomerase</fullName>
    </alternativeName>
</protein>
<name>LEUD_RHOCS</name>
<organism>
    <name type="scientific">Rhodospirillum centenum (strain ATCC 51521 / SW)</name>
    <dbReference type="NCBI Taxonomy" id="414684"/>
    <lineage>
        <taxon>Bacteria</taxon>
        <taxon>Pseudomonadati</taxon>
        <taxon>Pseudomonadota</taxon>
        <taxon>Alphaproteobacteria</taxon>
        <taxon>Rhodospirillales</taxon>
        <taxon>Rhodospirillaceae</taxon>
        <taxon>Rhodospirillum</taxon>
    </lineage>
</organism>
<dbReference type="EC" id="4.2.1.33" evidence="1"/>
<dbReference type="EMBL" id="CP000613">
    <property type="protein sequence ID" value="ACJ01303.1"/>
    <property type="molecule type" value="Genomic_DNA"/>
</dbReference>
<dbReference type="RefSeq" id="WP_012569076.1">
    <property type="nucleotide sequence ID" value="NC_011420.2"/>
</dbReference>
<dbReference type="SMR" id="B6IYC9"/>
<dbReference type="STRING" id="414684.RC1_3961"/>
<dbReference type="KEGG" id="rce:RC1_3961"/>
<dbReference type="eggNOG" id="COG0066">
    <property type="taxonomic scope" value="Bacteria"/>
</dbReference>
<dbReference type="HOGENOM" id="CLU_081378_0_3_5"/>
<dbReference type="OrthoDB" id="9777465at2"/>
<dbReference type="UniPathway" id="UPA00048">
    <property type="reaction ID" value="UER00071"/>
</dbReference>
<dbReference type="Proteomes" id="UP000001591">
    <property type="component" value="Chromosome"/>
</dbReference>
<dbReference type="GO" id="GO:0009316">
    <property type="term" value="C:3-isopropylmalate dehydratase complex"/>
    <property type="evidence" value="ECO:0007669"/>
    <property type="project" value="InterPro"/>
</dbReference>
<dbReference type="GO" id="GO:0003861">
    <property type="term" value="F:3-isopropylmalate dehydratase activity"/>
    <property type="evidence" value="ECO:0007669"/>
    <property type="project" value="UniProtKB-UniRule"/>
</dbReference>
<dbReference type="GO" id="GO:0009098">
    <property type="term" value="P:L-leucine biosynthetic process"/>
    <property type="evidence" value="ECO:0007669"/>
    <property type="project" value="UniProtKB-UniRule"/>
</dbReference>
<dbReference type="CDD" id="cd01577">
    <property type="entry name" value="IPMI_Swivel"/>
    <property type="match status" value="1"/>
</dbReference>
<dbReference type="FunFam" id="3.20.19.10:FF:000003">
    <property type="entry name" value="3-isopropylmalate dehydratase small subunit"/>
    <property type="match status" value="1"/>
</dbReference>
<dbReference type="Gene3D" id="3.20.19.10">
    <property type="entry name" value="Aconitase, domain 4"/>
    <property type="match status" value="1"/>
</dbReference>
<dbReference type="HAMAP" id="MF_01031">
    <property type="entry name" value="LeuD_type1"/>
    <property type="match status" value="1"/>
</dbReference>
<dbReference type="InterPro" id="IPR004431">
    <property type="entry name" value="3-IsopropMal_deHydase_ssu"/>
</dbReference>
<dbReference type="InterPro" id="IPR015928">
    <property type="entry name" value="Aconitase/3IPM_dehydase_swvl"/>
</dbReference>
<dbReference type="InterPro" id="IPR000573">
    <property type="entry name" value="AconitaseA/IPMdHydase_ssu_swvl"/>
</dbReference>
<dbReference type="InterPro" id="IPR033940">
    <property type="entry name" value="IPMI_Swivel"/>
</dbReference>
<dbReference type="InterPro" id="IPR050075">
    <property type="entry name" value="LeuD"/>
</dbReference>
<dbReference type="NCBIfam" id="TIGR00171">
    <property type="entry name" value="leuD"/>
    <property type="match status" value="1"/>
</dbReference>
<dbReference type="NCBIfam" id="NF002458">
    <property type="entry name" value="PRK01641.1"/>
    <property type="match status" value="1"/>
</dbReference>
<dbReference type="PANTHER" id="PTHR43345:SF5">
    <property type="entry name" value="3-ISOPROPYLMALATE DEHYDRATASE SMALL SUBUNIT"/>
    <property type="match status" value="1"/>
</dbReference>
<dbReference type="PANTHER" id="PTHR43345">
    <property type="entry name" value="3-ISOPROPYLMALATE DEHYDRATASE SMALL SUBUNIT 2-RELATED-RELATED"/>
    <property type="match status" value="1"/>
</dbReference>
<dbReference type="Pfam" id="PF00694">
    <property type="entry name" value="Aconitase_C"/>
    <property type="match status" value="1"/>
</dbReference>
<dbReference type="SUPFAM" id="SSF52016">
    <property type="entry name" value="LeuD/IlvD-like"/>
    <property type="match status" value="1"/>
</dbReference>
<gene>
    <name evidence="1" type="primary">leuD</name>
    <name type="ordered locus">RC1_3961</name>
</gene>
<sequence length="203" mass="22530">MEKFTVLTGVAAPLRIMNVDTDMIIPARYLKTIKRTGLGAGLFSSLRFDDTGAERPDFVLNQRAYRNATILIAGDNFGCGSSREHAPWALLDYGIRCVIAPSFADIFFNNCFKNGILPIALPEPVVEKLMAAADNGANATFTVDLEAQRIAMPDGESIPFEVEPFRRECLLNGWDDIGLTLRQSERIDAYEARQRTEQPWALG</sequence>
<keyword id="KW-0028">Amino-acid biosynthesis</keyword>
<keyword id="KW-0100">Branched-chain amino acid biosynthesis</keyword>
<keyword id="KW-0432">Leucine biosynthesis</keyword>
<keyword id="KW-0456">Lyase</keyword>
<keyword id="KW-1185">Reference proteome</keyword>
<accession>B6IYC9</accession>
<reference key="1">
    <citation type="submission" date="2007-03" db="EMBL/GenBank/DDBJ databases">
        <title>Genome sequence of Rhodospirillum centenum.</title>
        <authorList>
            <person name="Touchman J.W."/>
            <person name="Bauer C."/>
            <person name="Blankenship R.E."/>
        </authorList>
    </citation>
    <scope>NUCLEOTIDE SEQUENCE [LARGE SCALE GENOMIC DNA]</scope>
    <source>
        <strain>ATCC 51521 / SW</strain>
    </source>
</reference>
<evidence type="ECO:0000255" key="1">
    <source>
        <dbReference type="HAMAP-Rule" id="MF_01031"/>
    </source>
</evidence>
<feature type="chain" id="PRO_1000135829" description="3-isopropylmalate dehydratase small subunit">
    <location>
        <begin position="1"/>
        <end position="203"/>
    </location>
</feature>